<accession>Q7UZW1</accession>
<organism>
    <name type="scientific">Prochlorococcus marinus subsp. pastoris (strain CCMP1986 / NIES-2087 / MED4)</name>
    <dbReference type="NCBI Taxonomy" id="59919"/>
    <lineage>
        <taxon>Bacteria</taxon>
        <taxon>Bacillati</taxon>
        <taxon>Cyanobacteriota</taxon>
        <taxon>Cyanophyceae</taxon>
        <taxon>Synechococcales</taxon>
        <taxon>Prochlorococcaceae</taxon>
        <taxon>Prochlorococcus</taxon>
    </lineage>
</organism>
<sequence>MTSTLNTLKSNTGSRKKKLRKGRGIAAGQGASCGFGMRGQKSRSGRPTRPGFEGGQMPLYRRVPKLKHFEIINQKNFSIVNLSKLSEFKESEVVNIDSLVKKKLLFKPKFPLKILGNGEVKVKLKVQAHAFTKVAKEKIEAAGGSCEIINNK</sequence>
<proteinExistence type="inferred from homology"/>
<feature type="chain" id="PRO_0000104781" description="Large ribosomal subunit protein uL15">
    <location>
        <begin position="1"/>
        <end position="152"/>
    </location>
</feature>
<feature type="region of interest" description="Disordered" evidence="2">
    <location>
        <begin position="1"/>
        <end position="57"/>
    </location>
</feature>
<feature type="compositionally biased region" description="Polar residues" evidence="2">
    <location>
        <begin position="1"/>
        <end position="12"/>
    </location>
</feature>
<feature type="compositionally biased region" description="Basic residues" evidence="2">
    <location>
        <begin position="14"/>
        <end position="23"/>
    </location>
</feature>
<feature type="compositionally biased region" description="Gly residues" evidence="2">
    <location>
        <begin position="25"/>
        <end position="37"/>
    </location>
</feature>
<protein>
    <recommendedName>
        <fullName evidence="1">Large ribosomal subunit protein uL15</fullName>
    </recommendedName>
    <alternativeName>
        <fullName evidence="3">50S ribosomal protein L15</fullName>
    </alternativeName>
</protein>
<dbReference type="EMBL" id="BX548174">
    <property type="protein sequence ID" value="CAE20000.1"/>
    <property type="molecule type" value="Genomic_DNA"/>
</dbReference>
<dbReference type="RefSeq" id="WP_011133169.1">
    <property type="nucleotide sequence ID" value="NC_005072.1"/>
</dbReference>
<dbReference type="SMR" id="Q7UZW1"/>
<dbReference type="STRING" id="59919.PMM1541"/>
<dbReference type="KEGG" id="pmm:PMM1541"/>
<dbReference type="eggNOG" id="COG0200">
    <property type="taxonomic scope" value="Bacteria"/>
</dbReference>
<dbReference type="HOGENOM" id="CLU_055188_4_1_3"/>
<dbReference type="OrthoDB" id="9810293at2"/>
<dbReference type="Proteomes" id="UP000001026">
    <property type="component" value="Chromosome"/>
</dbReference>
<dbReference type="GO" id="GO:0022625">
    <property type="term" value="C:cytosolic large ribosomal subunit"/>
    <property type="evidence" value="ECO:0007669"/>
    <property type="project" value="TreeGrafter"/>
</dbReference>
<dbReference type="GO" id="GO:0019843">
    <property type="term" value="F:rRNA binding"/>
    <property type="evidence" value="ECO:0007669"/>
    <property type="project" value="UniProtKB-UniRule"/>
</dbReference>
<dbReference type="GO" id="GO:0003735">
    <property type="term" value="F:structural constituent of ribosome"/>
    <property type="evidence" value="ECO:0007669"/>
    <property type="project" value="InterPro"/>
</dbReference>
<dbReference type="GO" id="GO:0006412">
    <property type="term" value="P:translation"/>
    <property type="evidence" value="ECO:0007669"/>
    <property type="project" value="UniProtKB-UniRule"/>
</dbReference>
<dbReference type="Gene3D" id="3.100.10.10">
    <property type="match status" value="1"/>
</dbReference>
<dbReference type="HAMAP" id="MF_01341">
    <property type="entry name" value="Ribosomal_uL15"/>
    <property type="match status" value="1"/>
</dbReference>
<dbReference type="InterPro" id="IPR030878">
    <property type="entry name" value="Ribosomal_uL15"/>
</dbReference>
<dbReference type="InterPro" id="IPR021131">
    <property type="entry name" value="Ribosomal_uL15/eL18"/>
</dbReference>
<dbReference type="InterPro" id="IPR036227">
    <property type="entry name" value="Ribosomal_uL15/eL18_sf"/>
</dbReference>
<dbReference type="InterPro" id="IPR005749">
    <property type="entry name" value="Ribosomal_uL15_bac-type"/>
</dbReference>
<dbReference type="InterPro" id="IPR001196">
    <property type="entry name" value="Ribosomal_uL15_CS"/>
</dbReference>
<dbReference type="NCBIfam" id="TIGR01071">
    <property type="entry name" value="rplO_bact"/>
    <property type="match status" value="1"/>
</dbReference>
<dbReference type="PANTHER" id="PTHR12934">
    <property type="entry name" value="50S RIBOSOMAL PROTEIN L15"/>
    <property type="match status" value="1"/>
</dbReference>
<dbReference type="PANTHER" id="PTHR12934:SF11">
    <property type="entry name" value="LARGE RIBOSOMAL SUBUNIT PROTEIN UL15M"/>
    <property type="match status" value="1"/>
</dbReference>
<dbReference type="Pfam" id="PF00828">
    <property type="entry name" value="Ribosomal_L27A"/>
    <property type="match status" value="1"/>
</dbReference>
<dbReference type="SUPFAM" id="SSF52080">
    <property type="entry name" value="Ribosomal proteins L15p and L18e"/>
    <property type="match status" value="1"/>
</dbReference>
<dbReference type="PROSITE" id="PS00475">
    <property type="entry name" value="RIBOSOMAL_L15"/>
    <property type="match status" value="1"/>
</dbReference>
<reference key="1">
    <citation type="journal article" date="2003" name="Nature">
        <title>Genome divergence in two Prochlorococcus ecotypes reflects oceanic niche differentiation.</title>
        <authorList>
            <person name="Rocap G."/>
            <person name="Larimer F.W."/>
            <person name="Lamerdin J.E."/>
            <person name="Malfatti S."/>
            <person name="Chain P."/>
            <person name="Ahlgren N.A."/>
            <person name="Arellano A."/>
            <person name="Coleman M."/>
            <person name="Hauser L."/>
            <person name="Hess W.R."/>
            <person name="Johnson Z.I."/>
            <person name="Land M.L."/>
            <person name="Lindell D."/>
            <person name="Post A.F."/>
            <person name="Regala W."/>
            <person name="Shah M."/>
            <person name="Shaw S.L."/>
            <person name="Steglich C."/>
            <person name="Sullivan M.B."/>
            <person name="Ting C.S."/>
            <person name="Tolonen A."/>
            <person name="Webb E.A."/>
            <person name="Zinser E.R."/>
            <person name="Chisholm S.W."/>
        </authorList>
    </citation>
    <scope>NUCLEOTIDE SEQUENCE [LARGE SCALE GENOMIC DNA]</scope>
    <source>
        <strain>CCMP1986 / NIES-2087 / MED4</strain>
    </source>
</reference>
<keyword id="KW-0687">Ribonucleoprotein</keyword>
<keyword id="KW-0689">Ribosomal protein</keyword>
<keyword id="KW-0694">RNA-binding</keyword>
<keyword id="KW-0699">rRNA-binding</keyword>
<evidence type="ECO:0000255" key="1">
    <source>
        <dbReference type="HAMAP-Rule" id="MF_01341"/>
    </source>
</evidence>
<evidence type="ECO:0000256" key="2">
    <source>
        <dbReference type="SAM" id="MobiDB-lite"/>
    </source>
</evidence>
<evidence type="ECO:0000305" key="3"/>
<name>RL15_PROMP</name>
<comment type="function">
    <text evidence="1">Binds to the 23S rRNA.</text>
</comment>
<comment type="subunit">
    <text evidence="1">Part of the 50S ribosomal subunit.</text>
</comment>
<comment type="similarity">
    <text evidence="1">Belongs to the universal ribosomal protein uL15 family.</text>
</comment>
<gene>
    <name evidence="1" type="primary">rplO</name>
    <name type="synonym">rpl15</name>
    <name type="ordered locus">PMM1541</name>
</gene>